<feature type="initiator methionine" description="Removed">
    <location>
        <position position="1"/>
    </location>
</feature>
<feature type="chain" id="PRO_0000422322" description="NAD(P)H dehydrogenase (quinone)">
    <location>
        <begin position="2"/>
        <end position="198"/>
    </location>
</feature>
<feature type="domain" description="Flavodoxin-like">
    <location>
        <begin position="6"/>
        <end position="190"/>
    </location>
</feature>
<feature type="binding site" evidence="2">
    <location>
        <begin position="12"/>
        <end position="17"/>
    </location>
    <ligand>
        <name>FMN</name>
        <dbReference type="ChEBI" id="CHEBI:58210"/>
    </ligand>
</feature>
<feature type="binding site" evidence="2">
    <location>
        <begin position="79"/>
        <end position="81"/>
    </location>
    <ligand>
        <name>FMN</name>
        <dbReference type="ChEBI" id="CHEBI:58210"/>
    </ligand>
</feature>
<feature type="binding site" evidence="2">
    <location>
        <begin position="114"/>
        <end position="120"/>
    </location>
    <ligand>
        <name>FMN</name>
        <dbReference type="ChEBI" id="CHEBI:58210"/>
    </ligand>
</feature>
<feature type="binding site" evidence="2">
    <location>
        <position position="135"/>
    </location>
    <ligand>
        <name>FMN</name>
        <dbReference type="ChEBI" id="CHEBI:58210"/>
    </ligand>
</feature>
<feature type="strand" evidence="10">
    <location>
        <begin position="5"/>
        <end position="10"/>
    </location>
</feature>
<feature type="strand" evidence="10">
    <location>
        <begin position="13"/>
        <end position="15"/>
    </location>
</feature>
<feature type="helix" evidence="10">
    <location>
        <begin position="16"/>
        <end position="30"/>
    </location>
</feature>
<feature type="strand" evidence="10">
    <location>
        <begin position="34"/>
        <end position="39"/>
    </location>
</feature>
<feature type="helix" evidence="10">
    <location>
        <begin position="64"/>
        <end position="68"/>
    </location>
</feature>
<feature type="strand" evidence="10">
    <location>
        <begin position="71"/>
        <end position="78"/>
    </location>
</feature>
<feature type="helix" evidence="10">
    <location>
        <begin position="86"/>
        <end position="93"/>
    </location>
</feature>
<feature type="helix" evidence="10">
    <location>
        <begin position="96"/>
        <end position="101"/>
    </location>
</feature>
<feature type="turn" evidence="10">
    <location>
        <begin position="102"/>
        <end position="106"/>
    </location>
</feature>
<feature type="strand" evidence="10">
    <location>
        <begin position="108"/>
        <end position="116"/>
    </location>
</feature>
<feature type="helix" evidence="10">
    <location>
        <begin position="122"/>
        <end position="135"/>
    </location>
</feature>
<feature type="strand" evidence="8">
    <location>
        <begin position="160"/>
        <end position="165"/>
    </location>
</feature>
<feature type="turn" evidence="9">
    <location>
        <begin position="167"/>
        <end position="169"/>
    </location>
</feature>
<feature type="helix" evidence="10">
    <location>
        <begin position="176"/>
        <end position="197"/>
    </location>
</feature>
<dbReference type="EC" id="1.6.5.2" evidence="1"/>
<dbReference type="EMBL" id="AE004091">
    <property type="protein sequence ID" value="AAG04338.1"/>
    <property type="molecule type" value="Genomic_DNA"/>
</dbReference>
<dbReference type="PIR" id="D83526">
    <property type="entry name" value="D83526"/>
</dbReference>
<dbReference type="PDB" id="1ZWK">
    <property type="method" value="X-ray"/>
    <property type="resolution" value="2.60 A"/>
    <property type="chains" value="A/B=2-196"/>
</dbReference>
<dbReference type="PDB" id="1ZWL">
    <property type="method" value="X-ray"/>
    <property type="resolution" value="2.80 A"/>
    <property type="chains" value="A=2-196"/>
</dbReference>
<dbReference type="PDB" id="2A5L">
    <property type="method" value="X-ray"/>
    <property type="resolution" value="1.70 A"/>
    <property type="chains" value="A/B=1-198"/>
</dbReference>
<dbReference type="PDBsum" id="1ZWK"/>
<dbReference type="PDBsum" id="1ZWL"/>
<dbReference type="PDBsum" id="2A5L"/>
<dbReference type="SMR" id="Q9I509"/>
<dbReference type="FunCoup" id="Q9I509">
    <property type="interactions" value="437"/>
</dbReference>
<dbReference type="STRING" id="208964.PA0949"/>
<dbReference type="PaxDb" id="208964-PA0949"/>
<dbReference type="DNASU" id="882021"/>
<dbReference type="KEGG" id="pae:PA0949"/>
<dbReference type="PATRIC" id="fig|208964.12.peg.986"/>
<dbReference type="PseudoCAP" id="PA0949"/>
<dbReference type="HOGENOM" id="CLU_051402_0_2_6"/>
<dbReference type="InParanoid" id="Q9I509"/>
<dbReference type="OrthoDB" id="9801479at2"/>
<dbReference type="PhylomeDB" id="Q9I509"/>
<dbReference type="BioCyc" id="PAER208964:G1FZ6-969-MONOMER"/>
<dbReference type="EvolutionaryTrace" id="Q9I509"/>
<dbReference type="Proteomes" id="UP000002438">
    <property type="component" value="Chromosome"/>
</dbReference>
<dbReference type="GO" id="GO:0016020">
    <property type="term" value="C:membrane"/>
    <property type="evidence" value="ECO:0000318"/>
    <property type="project" value="GO_Central"/>
</dbReference>
<dbReference type="GO" id="GO:0009055">
    <property type="term" value="F:electron transfer activity"/>
    <property type="evidence" value="ECO:0007669"/>
    <property type="project" value="InterPro"/>
</dbReference>
<dbReference type="GO" id="GO:0010181">
    <property type="term" value="F:FMN binding"/>
    <property type="evidence" value="ECO:0007669"/>
    <property type="project" value="InterPro"/>
</dbReference>
<dbReference type="GO" id="GO:0003955">
    <property type="term" value="F:NAD(P)H dehydrogenase (quinone) activity"/>
    <property type="evidence" value="ECO:0000315"/>
    <property type="project" value="PseudoCAP"/>
</dbReference>
<dbReference type="GO" id="GO:0050136">
    <property type="term" value="F:NADH:ubiquinone reductase (non-electrogenic) activity"/>
    <property type="evidence" value="ECO:0007669"/>
    <property type="project" value="RHEA"/>
</dbReference>
<dbReference type="GO" id="GO:0008753">
    <property type="term" value="F:NADPH dehydrogenase (quinone) activity"/>
    <property type="evidence" value="ECO:0007669"/>
    <property type="project" value="RHEA"/>
</dbReference>
<dbReference type="GO" id="GO:0016655">
    <property type="term" value="F:oxidoreductase activity, acting on NAD(P)H, quinone or similar compound as acceptor"/>
    <property type="evidence" value="ECO:0000314"/>
    <property type="project" value="PseudoCAP"/>
</dbReference>
<dbReference type="GO" id="GO:0034599">
    <property type="term" value="P:cellular response to oxidative stress"/>
    <property type="evidence" value="ECO:0000315"/>
    <property type="project" value="PseudoCAP"/>
</dbReference>
<dbReference type="FunFam" id="3.40.50.360:FF:000001">
    <property type="entry name" value="NAD(P)H dehydrogenase (Quinone) FQR1-like"/>
    <property type="match status" value="1"/>
</dbReference>
<dbReference type="Gene3D" id="3.40.50.360">
    <property type="match status" value="1"/>
</dbReference>
<dbReference type="InterPro" id="IPR008254">
    <property type="entry name" value="Flavodoxin/NO_synth"/>
</dbReference>
<dbReference type="InterPro" id="IPR001226">
    <property type="entry name" value="Flavodoxin_CS"/>
</dbReference>
<dbReference type="InterPro" id="IPR029039">
    <property type="entry name" value="Flavoprotein-like_sf"/>
</dbReference>
<dbReference type="InterPro" id="IPR010089">
    <property type="entry name" value="Flavoprotein_WrbA-like"/>
</dbReference>
<dbReference type="InterPro" id="IPR005025">
    <property type="entry name" value="FMN_Rdtase-like_dom"/>
</dbReference>
<dbReference type="NCBIfam" id="TIGR01755">
    <property type="entry name" value="flav_wrbA"/>
    <property type="match status" value="1"/>
</dbReference>
<dbReference type="NCBIfam" id="NF002999">
    <property type="entry name" value="PRK03767.1"/>
    <property type="match status" value="1"/>
</dbReference>
<dbReference type="PANTHER" id="PTHR30546">
    <property type="entry name" value="FLAVODOXIN-RELATED PROTEIN WRBA-RELATED"/>
    <property type="match status" value="1"/>
</dbReference>
<dbReference type="PANTHER" id="PTHR30546:SF23">
    <property type="entry name" value="FLAVOPROTEIN-LIKE PROTEIN YCP4-RELATED"/>
    <property type="match status" value="1"/>
</dbReference>
<dbReference type="Pfam" id="PF03358">
    <property type="entry name" value="FMN_red"/>
    <property type="match status" value="1"/>
</dbReference>
<dbReference type="SUPFAM" id="SSF52218">
    <property type="entry name" value="Flavoproteins"/>
    <property type="match status" value="1"/>
</dbReference>
<dbReference type="PROSITE" id="PS00201">
    <property type="entry name" value="FLAVODOXIN"/>
    <property type="match status" value="1"/>
</dbReference>
<dbReference type="PROSITE" id="PS50902">
    <property type="entry name" value="FLAVODOXIN_LIKE"/>
    <property type="match status" value="1"/>
</dbReference>
<evidence type="ECO:0000250" key="1">
    <source>
        <dbReference type="UniProtKB" id="P0A8G6"/>
    </source>
</evidence>
<evidence type="ECO:0000269" key="2">
    <source>
    </source>
</evidence>
<evidence type="ECO:0000269" key="3">
    <source ref="3"/>
</evidence>
<evidence type="ECO:0000305" key="4"/>
<evidence type="ECO:0007744" key="5">
    <source>
        <dbReference type="PDB" id="1ZWK"/>
    </source>
</evidence>
<evidence type="ECO:0007744" key="6">
    <source>
        <dbReference type="PDB" id="1ZWL"/>
    </source>
</evidence>
<evidence type="ECO:0007744" key="7">
    <source>
        <dbReference type="PDB" id="2A5L"/>
    </source>
</evidence>
<evidence type="ECO:0007829" key="8">
    <source>
        <dbReference type="PDB" id="1ZWK"/>
    </source>
</evidence>
<evidence type="ECO:0007829" key="9">
    <source>
        <dbReference type="PDB" id="1ZWL"/>
    </source>
</evidence>
<evidence type="ECO:0007829" key="10">
    <source>
        <dbReference type="PDB" id="2A5L"/>
    </source>
</evidence>
<reference key="1">
    <citation type="journal article" date="2000" name="Nature">
        <title>Complete genome sequence of Pseudomonas aeruginosa PAO1, an opportunistic pathogen.</title>
        <authorList>
            <person name="Stover C.K."/>
            <person name="Pham X.-Q.T."/>
            <person name="Erwin A.L."/>
            <person name="Mizoguchi S.D."/>
            <person name="Warrener P."/>
            <person name="Hickey M.J."/>
            <person name="Brinkman F.S.L."/>
            <person name="Hufnagle W.O."/>
            <person name="Kowalik D.J."/>
            <person name="Lagrou M."/>
            <person name="Garber R.L."/>
            <person name="Goltry L."/>
            <person name="Tolentino E."/>
            <person name="Westbrock-Wadman S."/>
            <person name="Yuan Y."/>
            <person name="Brody L.L."/>
            <person name="Coulter S.N."/>
            <person name="Folger K.R."/>
            <person name="Kas A."/>
            <person name="Larbig K."/>
            <person name="Lim R.M."/>
            <person name="Smith K.A."/>
            <person name="Spencer D.H."/>
            <person name="Wong G.K.-S."/>
            <person name="Wu Z."/>
            <person name="Paulsen I.T."/>
            <person name="Reizer J."/>
            <person name="Saier M.H. Jr."/>
            <person name="Hancock R.E.W."/>
            <person name="Lory S."/>
            <person name="Olson M.V."/>
        </authorList>
    </citation>
    <scope>NUCLEOTIDE SEQUENCE [LARGE SCALE GENOMIC DNA]</scope>
    <source>
        <strain>ATCC 15692 / DSM 22644 / CIP 104116 / JCM 14847 / LMG 12228 / 1C / PRS 101 / PAO1</strain>
    </source>
</reference>
<reference evidence="5 6" key="2">
    <citation type="journal article" date="2005" name="Protein Sci.">
        <title>Crystal structures of the tryptophan repressor binding protein WrbA and complexes with flavin mononucleotide.</title>
        <authorList>
            <person name="Gorman J."/>
            <person name="Shapiro L."/>
        </authorList>
    </citation>
    <scope>X-RAY CRYSTALLOGRAPHY (2.60 ANGSTROMS) OF 2-196 IN COMPLEX WITH FMN</scope>
    <scope>COFACTOR</scope>
    <scope>SUBUNIT</scope>
</reference>
<reference evidence="7" key="3">
    <citation type="submission" date="2005-06" db="PDB data bank">
        <title>The crystal structure of the Trp repressor binding protein WrbA from Pseudomonas aeruginosa.</title>
        <authorList>
            <person name="Lunin V.V."/>
            <person name="Evdokimova E."/>
            <person name="Kudritska M."/>
            <person name="Osipiuk J."/>
            <person name="Joachimiak A."/>
            <person name="Edwards A.M."/>
            <person name="Savchenko A."/>
        </authorList>
    </citation>
    <scope>X-RAY CRYSTALLOGRAPHY (1.70 ANGSTROMS)</scope>
    <scope>SUBUNIT</scope>
</reference>
<organism>
    <name type="scientific">Pseudomonas aeruginosa (strain ATCC 15692 / DSM 22644 / CIP 104116 / JCM 14847 / LMG 12228 / 1C / PRS 101 / PAO1)</name>
    <dbReference type="NCBI Taxonomy" id="208964"/>
    <lineage>
        <taxon>Bacteria</taxon>
        <taxon>Pseudomonadati</taxon>
        <taxon>Pseudomonadota</taxon>
        <taxon>Gammaproteobacteria</taxon>
        <taxon>Pseudomonadales</taxon>
        <taxon>Pseudomonadaceae</taxon>
        <taxon>Pseudomonas</taxon>
    </lineage>
</organism>
<proteinExistence type="evidence at protein level"/>
<keyword id="KW-0002">3D-structure</keyword>
<keyword id="KW-0285">Flavoprotein</keyword>
<keyword id="KW-0288">FMN</keyword>
<keyword id="KW-0520">NAD</keyword>
<keyword id="KW-0521">NADP</keyword>
<keyword id="KW-0547">Nucleotide-binding</keyword>
<keyword id="KW-0560">Oxidoreductase</keyword>
<keyword id="KW-1185">Reference proteome</keyword>
<name>NQOR_PSEAE</name>
<protein>
    <recommendedName>
        <fullName>NAD(P)H dehydrogenase (quinone)</fullName>
        <ecNumber evidence="1">1.6.5.2</ecNumber>
    </recommendedName>
    <alternativeName>
        <fullName>Flavoprotein WrbA</fullName>
    </alternativeName>
    <alternativeName>
        <fullName>NAD(P)H:quinone oxidoreductase</fullName>
        <shortName>NQO</shortName>
    </alternativeName>
</protein>
<sequence length="198" mass="20763">MSSPYILVLYYSRHGATAEMARQIARGVEQGGFEARVRTVPAVSTECEAVAPDIPAEGALYATLEDLKNCAGLALGSPTRFGNMASPLKYFLDGTSSLWLTGSLVGKPAAVFTSTASLHGGQETTQLSMLLPLLHHGMLVLGIPYSEPALLETRGGGTPYGASHFAGADGKRSLDEHELTLCRALGKRLAETAGKLGS</sequence>
<gene>
    <name type="ordered locus">PA0949</name>
</gene>
<accession>Q9I509</accession>
<comment type="catalytic activity">
    <reaction evidence="1">
        <text>a quinone + NADH + H(+) = a quinol + NAD(+)</text>
        <dbReference type="Rhea" id="RHEA:46160"/>
        <dbReference type="ChEBI" id="CHEBI:15378"/>
        <dbReference type="ChEBI" id="CHEBI:24646"/>
        <dbReference type="ChEBI" id="CHEBI:57540"/>
        <dbReference type="ChEBI" id="CHEBI:57945"/>
        <dbReference type="ChEBI" id="CHEBI:132124"/>
        <dbReference type="EC" id="1.6.5.2"/>
    </reaction>
</comment>
<comment type="catalytic activity">
    <reaction evidence="1">
        <text>a quinone + NADPH + H(+) = a quinol + NADP(+)</text>
        <dbReference type="Rhea" id="RHEA:46164"/>
        <dbReference type="ChEBI" id="CHEBI:15378"/>
        <dbReference type="ChEBI" id="CHEBI:24646"/>
        <dbReference type="ChEBI" id="CHEBI:57783"/>
        <dbReference type="ChEBI" id="CHEBI:58349"/>
        <dbReference type="ChEBI" id="CHEBI:132124"/>
        <dbReference type="EC" id="1.6.5.2"/>
    </reaction>
</comment>
<comment type="cofactor">
    <cofactor evidence="2">
        <name>FMN</name>
        <dbReference type="ChEBI" id="CHEBI:58210"/>
    </cofactor>
    <text evidence="2">Binds 1 FMN per monomer.</text>
</comment>
<comment type="subunit">
    <text evidence="2 3">Homodimer.</text>
</comment>
<comment type="similarity">
    <text evidence="4">Belongs to the WrbA family.</text>
</comment>